<organism>
    <name type="scientific">Pasteurella multocida (strain Pm70)</name>
    <dbReference type="NCBI Taxonomy" id="272843"/>
    <lineage>
        <taxon>Bacteria</taxon>
        <taxon>Pseudomonadati</taxon>
        <taxon>Pseudomonadota</taxon>
        <taxon>Gammaproteobacteria</taxon>
        <taxon>Pasteurellales</taxon>
        <taxon>Pasteurellaceae</taxon>
        <taxon>Pasteurella</taxon>
    </lineage>
</organism>
<reference key="1">
    <citation type="journal article" date="2001" name="Proc. Natl. Acad. Sci. U.S.A.">
        <title>Complete genomic sequence of Pasteurella multocida Pm70.</title>
        <authorList>
            <person name="May B.J."/>
            <person name="Zhang Q."/>
            <person name="Li L.L."/>
            <person name="Paustian M.L."/>
            <person name="Whittam T.S."/>
            <person name="Kapur V."/>
        </authorList>
    </citation>
    <scope>NUCLEOTIDE SEQUENCE [LARGE SCALE GENOMIC DNA]</scope>
    <source>
        <strain>Pm70</strain>
    </source>
</reference>
<feature type="chain" id="PRO_0000216297" description="Uncharacterized protein PM0502">
    <location>
        <begin position="1"/>
        <end position="167"/>
    </location>
</feature>
<sequence>MIYGDYNQPLQIHIDKMISVPDEKWVYGAFNLIIDGCFYPGKEINWTLNIIINWLKSFLDEDINAYDMKNCEEHSAEYLFREAVISRIGYYYDEPEEKISLEELKKIYPKKVGIEISLPEITDTGLELFFFREKEKDILVFYFQGTVSKIELDMGYIHKLIASLPDI</sequence>
<name>Y502_PASMU</name>
<proteinExistence type="predicted"/>
<gene>
    <name type="ordered locus">PM0502</name>
</gene>
<keyword id="KW-1185">Reference proteome</keyword>
<accession>Q9CND0</accession>
<dbReference type="EMBL" id="AE004439">
    <property type="protein sequence ID" value="AAK02586.1"/>
    <property type="molecule type" value="Genomic_DNA"/>
</dbReference>
<dbReference type="RefSeq" id="WP_010906690.1">
    <property type="nucleotide sequence ID" value="NC_002663.1"/>
</dbReference>
<dbReference type="SMR" id="Q9CND0"/>
<dbReference type="STRING" id="272843.PM0502"/>
<dbReference type="EnsemblBacteria" id="AAK02586">
    <property type="protein sequence ID" value="AAK02586"/>
    <property type="gene ID" value="PM0502"/>
</dbReference>
<dbReference type="KEGG" id="pmu:PM0502"/>
<dbReference type="PATRIC" id="fig|272843.6.peg.509"/>
<dbReference type="HOGENOM" id="CLU_1592992_0_0_6"/>
<dbReference type="OrthoDB" id="9011866at2"/>
<dbReference type="Proteomes" id="UP000000809">
    <property type="component" value="Chromosome"/>
</dbReference>
<dbReference type="InterPro" id="IPR028958">
    <property type="entry name" value="Imm42"/>
</dbReference>
<dbReference type="Pfam" id="PF15593">
    <property type="entry name" value="Imm42"/>
    <property type="match status" value="1"/>
</dbReference>
<protein>
    <recommendedName>
        <fullName>Uncharacterized protein PM0502</fullName>
    </recommendedName>
</protein>